<proteinExistence type="inferred from homology"/>
<sequence length="233" mass="27395">MRKHLLDHLKTRKILGARIAKGEKTEQDLINLNMAPQVFMFKNLFSGQVLYSQVPAFHQDQIDEQFTRPNWENRKPSRRNDLWRIMCVANFENYEYAIAAYKGLVQLRQVRDVVQKKEAKALRKKNDEGNVWFSGQYRPTYSQEAVADLSHVIDEFELEGTSVMWESLWRKGEDTHWRSDLVEHDTLPPFNPRDQTILLDELRAKAVEEFANLRQQAQQSEQQSQSELESQTA</sequence>
<reference key="1">
    <citation type="journal article" date="2004" name="Nature">
        <title>Genome evolution in yeasts.</title>
        <authorList>
            <person name="Dujon B."/>
            <person name="Sherman D."/>
            <person name="Fischer G."/>
            <person name="Durrens P."/>
            <person name="Casaregola S."/>
            <person name="Lafontaine I."/>
            <person name="de Montigny J."/>
            <person name="Marck C."/>
            <person name="Neuveglise C."/>
            <person name="Talla E."/>
            <person name="Goffard N."/>
            <person name="Frangeul L."/>
            <person name="Aigle M."/>
            <person name="Anthouard V."/>
            <person name="Babour A."/>
            <person name="Barbe V."/>
            <person name="Barnay S."/>
            <person name="Blanchin S."/>
            <person name="Beckerich J.-M."/>
            <person name="Beyne E."/>
            <person name="Bleykasten C."/>
            <person name="Boisrame A."/>
            <person name="Boyer J."/>
            <person name="Cattolico L."/>
            <person name="Confanioleri F."/>
            <person name="de Daruvar A."/>
            <person name="Despons L."/>
            <person name="Fabre E."/>
            <person name="Fairhead C."/>
            <person name="Ferry-Dumazet H."/>
            <person name="Groppi A."/>
            <person name="Hantraye F."/>
            <person name="Hennequin C."/>
            <person name="Jauniaux N."/>
            <person name="Joyet P."/>
            <person name="Kachouri R."/>
            <person name="Kerrest A."/>
            <person name="Koszul R."/>
            <person name="Lemaire M."/>
            <person name="Lesur I."/>
            <person name="Ma L."/>
            <person name="Muller H."/>
            <person name="Nicaud J.-M."/>
            <person name="Nikolski M."/>
            <person name="Oztas S."/>
            <person name="Ozier-Kalogeropoulos O."/>
            <person name="Pellenz S."/>
            <person name="Potier S."/>
            <person name="Richard G.-F."/>
            <person name="Straub M.-L."/>
            <person name="Suleau A."/>
            <person name="Swennen D."/>
            <person name="Tekaia F."/>
            <person name="Wesolowski-Louvel M."/>
            <person name="Westhof E."/>
            <person name="Wirth B."/>
            <person name="Zeniou-Meyer M."/>
            <person name="Zivanovic Y."/>
            <person name="Bolotin-Fukuhara M."/>
            <person name="Thierry A."/>
            <person name="Bouchier C."/>
            <person name="Caudron B."/>
            <person name="Scarpelli C."/>
            <person name="Gaillardin C."/>
            <person name="Weissenbach J."/>
            <person name="Wincker P."/>
            <person name="Souciet J.-L."/>
        </authorList>
    </citation>
    <scope>NUCLEOTIDE SEQUENCE [LARGE SCALE GENOMIC DNA]</scope>
    <source>
        <strain>ATCC 36239 / CBS 767 / BCRC 21394 / JCM 1990 / NBRC 0083 / IGC 2968</strain>
    </source>
</reference>
<comment type="function">
    <text evidence="1">Transcription factor involved in regulation of RNA polymerase II-dependent transcription. Also involved in regulation of mitochondrial DNA recombination, maintenance and repair, and generation of homoplasmic cells (By similarity).</text>
</comment>
<comment type="subcellular location">
    <subcellularLocation>
        <location evidence="1">Nucleus</location>
    </subcellularLocation>
    <subcellularLocation>
        <location evidence="1">Mitochondrion</location>
    </subcellularLocation>
</comment>
<comment type="similarity">
    <text evidence="3">Belongs to the mitochondrion-specific ribosomal protein mL67 family.</text>
</comment>
<accession>Q6BQ83</accession>
<dbReference type="EMBL" id="CR382137">
    <property type="protein sequence ID" value="CAG87867.1"/>
    <property type="molecule type" value="Genomic_DNA"/>
</dbReference>
<dbReference type="RefSeq" id="XP_459637.1">
    <property type="nucleotide sequence ID" value="XM_459637.1"/>
</dbReference>
<dbReference type="SMR" id="Q6BQ83"/>
<dbReference type="FunCoup" id="Q6BQ83">
    <property type="interactions" value="170"/>
</dbReference>
<dbReference type="STRING" id="284592.Q6BQ83"/>
<dbReference type="GeneID" id="2902861"/>
<dbReference type="KEGG" id="dha:DEHA2E07502g"/>
<dbReference type="eggNOG" id="ENOG502QSKX">
    <property type="taxonomic scope" value="Eukaryota"/>
</dbReference>
<dbReference type="HOGENOM" id="CLU_092898_1_0_1"/>
<dbReference type="InParanoid" id="Q6BQ83"/>
<dbReference type="OMA" id="YRPTYTQ"/>
<dbReference type="OrthoDB" id="5333655at2759"/>
<dbReference type="Proteomes" id="UP000000599">
    <property type="component" value="Chromosome E"/>
</dbReference>
<dbReference type="GO" id="GO:0005739">
    <property type="term" value="C:mitochondrion"/>
    <property type="evidence" value="ECO:0007669"/>
    <property type="project" value="UniProtKB-SubCell"/>
</dbReference>
<dbReference type="GO" id="GO:0005634">
    <property type="term" value="C:nucleus"/>
    <property type="evidence" value="ECO:0007669"/>
    <property type="project" value="UniProtKB-SubCell"/>
</dbReference>
<dbReference type="GO" id="GO:1990904">
    <property type="term" value="C:ribonucleoprotein complex"/>
    <property type="evidence" value="ECO:0007669"/>
    <property type="project" value="UniProtKB-KW"/>
</dbReference>
<dbReference type="GO" id="GO:0005840">
    <property type="term" value="C:ribosome"/>
    <property type="evidence" value="ECO:0007669"/>
    <property type="project" value="UniProtKB-KW"/>
</dbReference>
<dbReference type="GO" id="GO:0000150">
    <property type="term" value="F:DNA strand exchange activity"/>
    <property type="evidence" value="ECO:0007669"/>
    <property type="project" value="InterPro"/>
</dbReference>
<dbReference type="GO" id="GO:0003697">
    <property type="term" value="F:single-stranded DNA binding"/>
    <property type="evidence" value="ECO:0007669"/>
    <property type="project" value="InterPro"/>
</dbReference>
<dbReference type="GO" id="GO:0003735">
    <property type="term" value="F:structural constituent of ribosome"/>
    <property type="evidence" value="ECO:0007669"/>
    <property type="project" value="TreeGrafter"/>
</dbReference>
<dbReference type="GO" id="GO:0000002">
    <property type="term" value="P:mitochondrial genome maintenance"/>
    <property type="evidence" value="ECO:0007669"/>
    <property type="project" value="InterPro"/>
</dbReference>
<dbReference type="InterPro" id="IPR024629">
    <property type="entry name" value="Ribosomal_mL67"/>
</dbReference>
<dbReference type="PANTHER" id="PTHR28184:SF1">
    <property type="entry name" value="LARGE RIBOSOMAL SUBUNIT PROTEIN ML67"/>
    <property type="match status" value="1"/>
</dbReference>
<dbReference type="PANTHER" id="PTHR28184">
    <property type="entry name" value="MITOCHONDRIAL HOMOLOGOUS RECOMBINATION PROTEIN 1"/>
    <property type="match status" value="1"/>
</dbReference>
<dbReference type="Pfam" id="PF12829">
    <property type="entry name" value="Mhr1"/>
    <property type="match status" value="1"/>
</dbReference>
<feature type="chain" id="PRO_0000255964" description="Large ribosomal subunit protein mL67">
    <location>
        <begin position="1"/>
        <end position="233"/>
    </location>
</feature>
<feature type="region of interest" description="Disordered" evidence="2">
    <location>
        <begin position="214"/>
        <end position="233"/>
    </location>
</feature>
<feature type="compositionally biased region" description="Low complexity" evidence="2">
    <location>
        <begin position="215"/>
        <end position="233"/>
    </location>
</feature>
<name>MHR1_DEBHA</name>
<evidence type="ECO:0000250" key="1"/>
<evidence type="ECO:0000256" key="2">
    <source>
        <dbReference type="SAM" id="MobiDB-lite"/>
    </source>
</evidence>
<evidence type="ECO:0000305" key="3"/>
<keyword id="KW-0496">Mitochondrion</keyword>
<keyword id="KW-0539">Nucleus</keyword>
<keyword id="KW-1185">Reference proteome</keyword>
<keyword id="KW-0687">Ribonucleoprotein</keyword>
<keyword id="KW-0689">Ribosomal protein</keyword>
<keyword id="KW-0804">Transcription</keyword>
<keyword id="KW-0805">Transcription regulation</keyword>
<organism>
    <name type="scientific">Debaryomyces hansenii (strain ATCC 36239 / CBS 767 / BCRC 21394 / JCM 1990 / NBRC 0083 / IGC 2968)</name>
    <name type="common">Yeast</name>
    <name type="synonym">Torulaspora hansenii</name>
    <dbReference type="NCBI Taxonomy" id="284592"/>
    <lineage>
        <taxon>Eukaryota</taxon>
        <taxon>Fungi</taxon>
        <taxon>Dikarya</taxon>
        <taxon>Ascomycota</taxon>
        <taxon>Saccharomycotina</taxon>
        <taxon>Pichiomycetes</taxon>
        <taxon>Debaryomycetaceae</taxon>
        <taxon>Debaryomyces</taxon>
    </lineage>
</organism>
<protein>
    <recommendedName>
        <fullName evidence="3">Large ribosomal subunit protein mL67</fullName>
    </recommendedName>
    <alternativeName>
        <fullName>Mitochondrial homologous recombination protein 1</fullName>
    </alternativeName>
</protein>
<gene>
    <name type="primary">MHR1</name>
    <name type="ordered locus">DEHA2E07502g</name>
</gene>